<name>Y1400_ARATH</name>
<sequence length="122" mass="13802">MTLKGALSVKFDVKCPADKFFSAFVEDTNRPFEKNGKTEIEAVDLVKKTMTIQMSGSEIQKYFKTLKGSIAVTPIGVGDGSHVVWTFHFEKVHKDIDDPHSIIDESVKYFKKLDEAILNFKE</sequence>
<reference key="1">
    <citation type="journal article" date="2000" name="Nature">
        <title>Sequence and analysis of chromosome 1 of the plant Arabidopsis thaliana.</title>
        <authorList>
            <person name="Theologis A."/>
            <person name="Ecker J.R."/>
            <person name="Palm C.J."/>
            <person name="Federspiel N.A."/>
            <person name="Kaul S."/>
            <person name="White O."/>
            <person name="Alonso J."/>
            <person name="Altafi H."/>
            <person name="Araujo R."/>
            <person name="Bowman C.L."/>
            <person name="Brooks S.Y."/>
            <person name="Buehler E."/>
            <person name="Chan A."/>
            <person name="Chao Q."/>
            <person name="Chen H."/>
            <person name="Cheuk R.F."/>
            <person name="Chin C.W."/>
            <person name="Chung M.K."/>
            <person name="Conn L."/>
            <person name="Conway A.B."/>
            <person name="Conway A.R."/>
            <person name="Creasy T.H."/>
            <person name="Dewar K."/>
            <person name="Dunn P."/>
            <person name="Etgu P."/>
            <person name="Feldblyum T.V."/>
            <person name="Feng J.-D."/>
            <person name="Fong B."/>
            <person name="Fujii C.Y."/>
            <person name="Gill J.E."/>
            <person name="Goldsmith A.D."/>
            <person name="Haas B."/>
            <person name="Hansen N.F."/>
            <person name="Hughes B."/>
            <person name="Huizar L."/>
            <person name="Hunter J.L."/>
            <person name="Jenkins J."/>
            <person name="Johnson-Hopson C."/>
            <person name="Khan S."/>
            <person name="Khaykin E."/>
            <person name="Kim C.J."/>
            <person name="Koo H.L."/>
            <person name="Kremenetskaia I."/>
            <person name="Kurtz D.B."/>
            <person name="Kwan A."/>
            <person name="Lam B."/>
            <person name="Langin-Hooper S."/>
            <person name="Lee A."/>
            <person name="Lee J.M."/>
            <person name="Lenz C.A."/>
            <person name="Li J.H."/>
            <person name="Li Y.-P."/>
            <person name="Lin X."/>
            <person name="Liu S.X."/>
            <person name="Liu Z.A."/>
            <person name="Luros J.S."/>
            <person name="Maiti R."/>
            <person name="Marziali A."/>
            <person name="Militscher J."/>
            <person name="Miranda M."/>
            <person name="Nguyen M."/>
            <person name="Nierman W.C."/>
            <person name="Osborne B.I."/>
            <person name="Pai G."/>
            <person name="Peterson J."/>
            <person name="Pham P.K."/>
            <person name="Rizzo M."/>
            <person name="Rooney T."/>
            <person name="Rowley D."/>
            <person name="Sakano H."/>
            <person name="Salzberg S.L."/>
            <person name="Schwartz J.R."/>
            <person name="Shinn P."/>
            <person name="Southwick A.M."/>
            <person name="Sun H."/>
            <person name="Tallon L.J."/>
            <person name="Tambunga G."/>
            <person name="Toriumi M.J."/>
            <person name="Town C.D."/>
            <person name="Utterback T."/>
            <person name="Van Aken S."/>
            <person name="Vaysberg M."/>
            <person name="Vysotskaia V.S."/>
            <person name="Walker M."/>
            <person name="Wu D."/>
            <person name="Yu G."/>
            <person name="Fraser C.M."/>
            <person name="Venter J.C."/>
            <person name="Davis R.W."/>
        </authorList>
    </citation>
    <scope>NUCLEOTIDE SEQUENCE [LARGE SCALE GENOMIC DNA]</scope>
    <source>
        <strain>cv. Columbia</strain>
    </source>
</reference>
<reference key="2">
    <citation type="journal article" date="2017" name="Plant J.">
        <title>Araport11: a complete reannotation of the Arabidopsis thaliana reference genome.</title>
        <authorList>
            <person name="Cheng C.Y."/>
            <person name="Krishnakumar V."/>
            <person name="Chan A.P."/>
            <person name="Thibaud-Nissen F."/>
            <person name="Schobel S."/>
            <person name="Town C.D."/>
        </authorList>
    </citation>
    <scope>GENOME REANNOTATION</scope>
    <source>
        <strain>cv. Columbia</strain>
    </source>
</reference>
<reference key="3">
    <citation type="submission" date="2005-02" db="PDB data bank">
        <title>X-ray structure of gene product from Arabidopsis thaliana At1g24000.</title>
        <authorList>
            <consortium name="Center for eukaryotic structural genomics (CESG)"/>
        </authorList>
    </citation>
    <scope>X-RAY CRYSTALLOGRAPHY (2.1 ANGSTROMS) OF 2-122</scope>
</reference>
<evidence type="ECO:0000305" key="1"/>
<evidence type="ECO:0007829" key="2">
    <source>
        <dbReference type="PDB" id="1VJH"/>
    </source>
</evidence>
<proteinExistence type="evidence at protein level"/>
<comment type="sequence caution" evidence="1">
    <conflict type="erroneous gene model prediction">
        <sequence resource="EMBL-CDS" id="AAF87152"/>
    </conflict>
    <text>The predicted gene At1g24000 has been split into 3 genes: At1g24000, At1g24010 and At1g24020.</text>
</comment>
<gene>
    <name type="ordered locus">At1g24000</name>
    <name type="ORF">T23E23.17</name>
</gene>
<feature type="chain" id="PRO_0000220594" description="Uncharacterized protein At1g24000">
    <location>
        <begin position="1"/>
        <end position="122"/>
    </location>
</feature>
<feature type="strand" evidence="2">
    <location>
        <begin position="3"/>
        <end position="15"/>
    </location>
</feature>
<feature type="helix" evidence="2">
    <location>
        <begin position="17"/>
        <end position="27"/>
    </location>
</feature>
<feature type="strand" evidence="2">
    <location>
        <begin position="37"/>
        <end position="44"/>
    </location>
</feature>
<feature type="turn" evidence="2">
    <location>
        <begin position="45"/>
        <end position="48"/>
    </location>
</feature>
<feature type="strand" evidence="2">
    <location>
        <begin position="49"/>
        <end position="55"/>
    </location>
</feature>
<feature type="helix" evidence="2">
    <location>
        <begin position="59"/>
        <end position="61"/>
    </location>
</feature>
<feature type="strand" evidence="2">
    <location>
        <begin position="63"/>
        <end position="74"/>
    </location>
</feature>
<feature type="strand" evidence="2">
    <location>
        <begin position="76"/>
        <end position="79"/>
    </location>
</feature>
<feature type="strand" evidence="2">
    <location>
        <begin position="81"/>
        <end position="93"/>
    </location>
</feature>
<feature type="helix" evidence="2">
    <location>
        <begin position="100"/>
        <end position="119"/>
    </location>
</feature>
<accession>P0C0B0</accession>
<accession>Q9LR93</accession>
<keyword id="KW-0002">3D-structure</keyword>
<keyword id="KW-1185">Reference proteome</keyword>
<organism>
    <name type="scientific">Arabidopsis thaliana</name>
    <name type="common">Mouse-ear cress</name>
    <dbReference type="NCBI Taxonomy" id="3702"/>
    <lineage>
        <taxon>Eukaryota</taxon>
        <taxon>Viridiplantae</taxon>
        <taxon>Streptophyta</taxon>
        <taxon>Embryophyta</taxon>
        <taxon>Tracheophyta</taxon>
        <taxon>Spermatophyta</taxon>
        <taxon>Magnoliopsida</taxon>
        <taxon>eudicotyledons</taxon>
        <taxon>Gunneridae</taxon>
        <taxon>Pentapetalae</taxon>
        <taxon>rosids</taxon>
        <taxon>malvids</taxon>
        <taxon>Brassicales</taxon>
        <taxon>Brassicaceae</taxon>
        <taxon>Camelineae</taxon>
        <taxon>Arabidopsis</taxon>
    </lineage>
</organism>
<dbReference type="EMBL" id="AC002423">
    <property type="protein sequence ID" value="AAF87152.1"/>
    <property type="status" value="ALT_SEQ"/>
    <property type="molecule type" value="Genomic_DNA"/>
</dbReference>
<dbReference type="EMBL" id="CP002684">
    <property type="protein sequence ID" value="AEE30464.1"/>
    <property type="molecule type" value="Genomic_DNA"/>
</dbReference>
<dbReference type="RefSeq" id="NP_173811.1">
    <property type="nucleotide sequence ID" value="NM_102247.3"/>
</dbReference>
<dbReference type="PDB" id="1VJH">
    <property type="method" value="X-ray"/>
    <property type="resolution" value="2.10 A"/>
    <property type="chains" value="A/B=2-122"/>
</dbReference>
<dbReference type="PDB" id="2Q3Q">
    <property type="method" value="X-ray"/>
    <property type="resolution" value="2.10 A"/>
    <property type="chains" value="A/B=2-122"/>
</dbReference>
<dbReference type="PDBsum" id="1VJH"/>
<dbReference type="PDBsum" id="2Q3Q"/>
<dbReference type="BMRB" id="P0C0B0"/>
<dbReference type="SMR" id="P0C0B0"/>
<dbReference type="STRING" id="3702.P0C0B0"/>
<dbReference type="PaxDb" id="3702-AT1G24000.1"/>
<dbReference type="ProteomicsDB" id="242433"/>
<dbReference type="DNASU" id="839012"/>
<dbReference type="EnsemblPlants" id="AT1G24000.1">
    <property type="protein sequence ID" value="AT1G24000.1"/>
    <property type="gene ID" value="AT1G24000"/>
</dbReference>
<dbReference type="GeneID" id="839012"/>
<dbReference type="Gramene" id="AT1G24000.1">
    <property type="protein sequence ID" value="AT1G24000.1"/>
    <property type="gene ID" value="AT1G24000"/>
</dbReference>
<dbReference type="KEGG" id="ath:AT1G24000"/>
<dbReference type="Araport" id="AT1G24000"/>
<dbReference type="TAIR" id="AT1G24000"/>
<dbReference type="HOGENOM" id="CLU_081988_5_0_1"/>
<dbReference type="InParanoid" id="P0C0B0"/>
<dbReference type="OMA" id="FKEIDDH"/>
<dbReference type="PhylomeDB" id="P0C0B0"/>
<dbReference type="EvolutionaryTrace" id="P0C0B0"/>
<dbReference type="PRO" id="PR:P0C0B0"/>
<dbReference type="Proteomes" id="UP000006548">
    <property type="component" value="Chromosome 1"/>
</dbReference>
<dbReference type="ExpressionAtlas" id="P0C0B0">
    <property type="expression patterns" value="baseline and differential"/>
</dbReference>
<dbReference type="GO" id="GO:0006952">
    <property type="term" value="P:defense response"/>
    <property type="evidence" value="ECO:0007669"/>
    <property type="project" value="InterPro"/>
</dbReference>
<dbReference type="Gene3D" id="3.30.530.20">
    <property type="match status" value="1"/>
</dbReference>
<dbReference type="InterPro" id="IPR000916">
    <property type="entry name" value="Bet_v_I/MLP"/>
</dbReference>
<dbReference type="InterPro" id="IPR051761">
    <property type="entry name" value="MLP-like_ligand-binding"/>
</dbReference>
<dbReference type="InterPro" id="IPR023393">
    <property type="entry name" value="START-like_dom_sf"/>
</dbReference>
<dbReference type="PANTHER" id="PTHR31907">
    <property type="entry name" value="MLP-LIKE PROTEIN 423"/>
    <property type="match status" value="1"/>
</dbReference>
<dbReference type="Pfam" id="PF00407">
    <property type="entry name" value="Bet_v_1"/>
    <property type="match status" value="1"/>
</dbReference>
<dbReference type="SMART" id="SM01037">
    <property type="entry name" value="Bet_v_1"/>
    <property type="match status" value="1"/>
</dbReference>
<dbReference type="SUPFAM" id="SSF55961">
    <property type="entry name" value="Bet v1-like"/>
    <property type="match status" value="1"/>
</dbReference>
<protein>
    <recommendedName>
        <fullName>Uncharacterized protein At1g24000</fullName>
    </recommendedName>
</protein>